<accession>B0Z4R9</accession>
<sequence length="2360" mass="275019">MGNQRNRVNLNPFRFWVFELREILREIKNYRYRYLGPFNSVGSFIHIFVHQERFLKLLDPRIWSVLRSQGSTGVVLFLVAVLIYRINNRNMIERKNIYLTGLLPIPTNFAGPRNETLEESFLSSNINRLIVSLLHLPKVKRLSESCFLDPKESTRVLPITKWRNWIGKRRDSSQLKGSSDQSRDHFDSIGTEDSEYHTLINQREIQQRKERSSLLDPSFLQTERTEIESDRFSKGLSGSSSKSRLFTEGEKEMNNHLPPEEIEEFLGNPTRSILSFFSDEWSELHLGSNPTERSTVDQKLLKKEQEVSFAPFRRSETKEIVNLFKTMAYLQKTVSIHPISSDPGCDMVPKDELDSEERFQEMADLFTLSITEPDLVYHKGFAFSIDSSVLDQKQFLAEARDESKKKSLLVLPPVFYQENESFYRRIRKRGVQISCGNDLEDPKPKIVVFASNNIVEAVNQYRWIRNLIQIQYSTHGYIRNVLNRFFLMNRSDRNFEYGIQRDQIGNDTLNHRTFMKYTINQHLSNLKKSQKKGSDPLILISRTERSVNRDPNAYRYKWSKGSKNFQEHLEHFVSEQKSRFQVVFDRYRSIRNRYRSRINQYSSDRSEVSDKKDNRYRSRINQYSSDRSEVSDKKNLAKFRSFVFSKLLLFLSNSLPFFFVSFGNTPPIQRSEIRVSELKGPNDRLCNQFLESIGLQLVYLKKLKPFLLDDHETSQKSKLLFNKKPEGMIDSFHTRNNRGKSLDSYFSMISHDQDNWLNPVKPFHRSSLISSFYKANRLRFLNNPHDFGFFCNKRFPFYVDIKNLDFTYGQFLNILFIRNTKFSLCGDKKKHAFLERDTISSIESQVSNLFKDFPQSGDERYNFYKYFHLAMRSDPLVRRAIYSIADISGTPLTEGQRVNFERTYCQPLSDMNLSDSEGKNLYQYLNFNSNMGLIYSEKCFSSEKRKKKKPEKRKKKKPEKRKEKKPEKRKEKKPEKRKEKKPEKRKEKKPEKRKEKKQSLYLKQWVEKVQMDRALQGERVSLILSNWNLFKTYVMPFSLTSTGYNLLKLMFLDTLGSYVMPLLRSSPKFVSICYAISDPCGISWRILQKKLCLLQWNWISAISNKCFHKLLLSEESIHRNNESPSMTDLRWPNLGEFLYSILFLLFVAGHLVFSHLLFFSQAFSELQRDFARAQSLMIPSYIVELRELLDMYPAPRSFKKLFLAAREKLVNYLRWGGERKSFLIHLFELLNITPNPIDRIAFLKNTRHLSHTSKELYSLITELGDFSSLCSGQRYRYDQIIENVNGPCCLIDDKIESWISNCDAIEDKEREFLVPFCNFTRETRIDQILLSLTHSDHLSNNDSASQMSEEPGAFYLRHLVDIHKKGLMNYECNTSCLAERRIFLAHYQTITYSPCGDNRSHFPSHGKTFSLRLPLHPSRATLVIGSIGSGRSYLVKSLATNSYVPLITVVLNKFLKNWTPQGFDIHESGVYDEYGDDAEEANDYGASFFDFLDNDSDDYEDRDSDDYEPGASDDYEPGDMEDFVDSEMTEWLTKTNVPLVYQLLDDEIDEFYITLQFELAKAMSPCILWIPNIHDLDAKESDYLSLGLLVNHLSRDCGRRSTKNEILVIASTHIPQKVDPSLIGPDGLSTCIKTRRLLVPQQQQCLFTLSYTRGFHLENKMFHTHTNEFESTILGPSVPDLVALTNEALSISITQKKSIIDTTTIRYALHRKTWDLEADRNLSPAKEHGTLFYQVGRAFAHTVLLRNCPIDPISIYIKKNLCEAGDSSLYKWYFELGTSMKKLTILLYLLTCSAGSIAQDLLSPPGPDEQNLITSYGLVENDSDLVHGLSDIVHGLLELEGALVGSSPTEEEVEGTEEEVEGTEDEEVEGTEEEVEGTEDEEGEGTEEEVEGTEDEEGEGTEEEVEGTEEEVEGTEDEEGEGTEDEEVEGTEEEVEGTEDEEGEGTEEEVEGTEEEVEGTEEEVEGTEEEVEGTEDEEVEGTEEEVEGTEDEEGEGTEYEEVEGTEDEEVEGTEKDSSQFDNDRVTLLLRPKPRNPLDIQRLIYQHQKYESELEEDDDDDEDVFAPQKMLEDLFSELVWSPRIWHPWDFILDCEAEIPAEEIPEEEDPLPEEALETEVAVWGEEEEGEADDEEDERLEAQQEDELLEEEDEELKEEEDELHEEEEEEEEEEEEEDELHEEEEEEEEEEEDELQENDSEFFRSETQQPQARDGFSEEEGCFRISQFMWVPGDPLSFLYKDTPFVEVLSYPEEATEISKELLRLLNPKTKRDAPKRARQRWWTKKKQDKHYELVLDRQRWLITKSSLSKSNGFFRSNTPSESYQYLSNLFLSNRRLLDQMTKTFFRKKWLFPDEMKIGFMEQ</sequence>
<reference key="1">
    <citation type="journal article" date="2008" name="Nucleic Acids Res.">
        <title>The complete nucleotide sequences of the five genetically distinct plastid genomes of Oenothera, subsection Oenothera: I. Sequence evaluation and plastome evolution.</title>
        <authorList>
            <person name="Greiner S."/>
            <person name="Wang X."/>
            <person name="Rauwolf U."/>
            <person name="Silber M.V."/>
            <person name="Mayer K."/>
            <person name="Meurer J."/>
            <person name="Haberer G."/>
            <person name="Herrmann R.G."/>
        </authorList>
    </citation>
    <scope>NUCLEOTIDE SEQUENCE [LARGE SCALE GENOMIC DNA]</scope>
    <source>
        <strain>cv. Douthat 1</strain>
    </source>
</reference>
<name>YCF2_OENAR</name>
<feature type="chain" id="PRO_0000343783" description="Protein Ycf2">
    <location>
        <begin position="1"/>
        <end position="2360"/>
    </location>
</feature>
<feature type="region of interest" description="Disordered" evidence="2">
    <location>
        <begin position="172"/>
        <end position="193"/>
    </location>
</feature>
<feature type="region of interest" description="Disordered" evidence="2">
    <location>
        <begin position="225"/>
        <end position="255"/>
    </location>
</feature>
<feature type="region of interest" description="Disordered" evidence="2">
    <location>
        <begin position="944"/>
        <end position="995"/>
    </location>
</feature>
<feature type="region of interest" description="Disordered" evidence="2">
    <location>
        <begin position="1499"/>
        <end position="1518"/>
    </location>
</feature>
<feature type="region of interest" description="Disordered" evidence="2">
    <location>
        <begin position="1843"/>
        <end position="2031"/>
    </location>
</feature>
<feature type="region of interest" description="Disordered" evidence="2">
    <location>
        <begin position="2098"/>
        <end position="2214"/>
    </location>
</feature>
<feature type="compositionally biased region" description="Low complexity" evidence="2">
    <location>
        <begin position="234"/>
        <end position="244"/>
    </location>
</feature>
<feature type="compositionally biased region" description="Basic and acidic residues" evidence="2">
    <location>
        <begin position="245"/>
        <end position="254"/>
    </location>
</feature>
<feature type="compositionally biased region" description="Basic residues" evidence="2">
    <location>
        <begin position="944"/>
        <end position="959"/>
    </location>
</feature>
<feature type="compositionally biased region" description="Basic and acidic residues" evidence="2">
    <location>
        <begin position="960"/>
        <end position="993"/>
    </location>
</feature>
<feature type="compositionally biased region" description="Acidic residues" evidence="2">
    <location>
        <begin position="1849"/>
        <end position="2011"/>
    </location>
</feature>
<feature type="compositionally biased region" description="Basic and acidic residues" evidence="2">
    <location>
        <begin position="2012"/>
        <end position="2024"/>
    </location>
</feature>
<feature type="compositionally biased region" description="Acidic residues" evidence="2">
    <location>
        <begin position="2098"/>
        <end position="2115"/>
    </location>
</feature>
<feature type="compositionally biased region" description="Acidic residues" evidence="2">
    <location>
        <begin position="2122"/>
        <end position="2197"/>
    </location>
</feature>
<feature type="binding site" evidence="1">
    <location>
        <begin position="1425"/>
        <end position="1432"/>
    </location>
    <ligand>
        <name>ATP</name>
        <dbReference type="ChEBI" id="CHEBI:30616"/>
    </ligand>
</feature>
<proteinExistence type="inferred from homology"/>
<dbReference type="EMBL" id="EU262887">
    <property type="protein sequence ID" value="ABW98747.1"/>
    <property type="molecule type" value="Genomic_DNA"/>
</dbReference>
<dbReference type="EMBL" id="EU262887">
    <property type="protein sequence ID" value="ABW98764.1"/>
    <property type="molecule type" value="Genomic_DNA"/>
</dbReference>
<dbReference type="GO" id="GO:0009570">
    <property type="term" value="C:chloroplast stroma"/>
    <property type="evidence" value="ECO:0007669"/>
    <property type="project" value="UniProtKB-SubCell"/>
</dbReference>
<dbReference type="GO" id="GO:0005524">
    <property type="term" value="F:ATP binding"/>
    <property type="evidence" value="ECO:0007669"/>
    <property type="project" value="UniProtKB-KW"/>
</dbReference>
<dbReference type="GO" id="GO:0016887">
    <property type="term" value="F:ATP hydrolysis activity"/>
    <property type="evidence" value="ECO:0007669"/>
    <property type="project" value="InterPro"/>
</dbReference>
<dbReference type="CDD" id="cd19505">
    <property type="entry name" value="RecA-like_Ycf2"/>
    <property type="match status" value="1"/>
</dbReference>
<dbReference type="Gene3D" id="3.40.50.300">
    <property type="entry name" value="P-loop containing nucleotide triphosphate hydrolases"/>
    <property type="match status" value="1"/>
</dbReference>
<dbReference type="HAMAP" id="MF_01330">
    <property type="entry name" value="Ycf2"/>
    <property type="match status" value="1"/>
</dbReference>
<dbReference type="InterPro" id="IPR003593">
    <property type="entry name" value="AAA+_ATPase"/>
</dbReference>
<dbReference type="InterPro" id="IPR027417">
    <property type="entry name" value="P-loop_NTPase"/>
</dbReference>
<dbReference type="InterPro" id="IPR008543">
    <property type="entry name" value="Uncharacterised_Ycf2"/>
</dbReference>
<dbReference type="InterPro" id="IPR056777">
    <property type="entry name" value="Ycf2_N"/>
</dbReference>
<dbReference type="PANTHER" id="PTHR33078:SF92">
    <property type="entry name" value="PROTEIN YCF2"/>
    <property type="match status" value="1"/>
</dbReference>
<dbReference type="PANTHER" id="PTHR33078">
    <property type="entry name" value="PROTEIN YCF2-RELATED"/>
    <property type="match status" value="1"/>
</dbReference>
<dbReference type="Pfam" id="PF05695">
    <property type="entry name" value="Ycf2"/>
    <property type="match status" value="5"/>
</dbReference>
<dbReference type="SMART" id="SM00382">
    <property type="entry name" value="AAA"/>
    <property type="match status" value="1"/>
</dbReference>
<dbReference type="SUPFAM" id="SSF52540">
    <property type="entry name" value="P-loop containing nucleoside triphosphate hydrolases"/>
    <property type="match status" value="1"/>
</dbReference>
<geneLocation type="chloroplast"/>
<keyword id="KW-0067">ATP-binding</keyword>
<keyword id="KW-0150">Chloroplast</keyword>
<keyword id="KW-0547">Nucleotide-binding</keyword>
<keyword id="KW-0934">Plastid</keyword>
<evidence type="ECO:0000255" key="1">
    <source>
        <dbReference type="HAMAP-Rule" id="MF_01330"/>
    </source>
</evidence>
<evidence type="ECO:0000256" key="2">
    <source>
        <dbReference type="SAM" id="MobiDB-lite"/>
    </source>
</evidence>
<gene>
    <name evidence="1" type="primary">ycf2-A</name>
</gene>
<gene>
    <name evidence="1" type="primary">ycf2-B</name>
</gene>
<organism>
    <name type="scientific">Oenothera argillicola</name>
    <name type="common">Appalachian evening primrose</name>
    <dbReference type="NCBI Taxonomy" id="3940"/>
    <lineage>
        <taxon>Eukaryota</taxon>
        <taxon>Viridiplantae</taxon>
        <taxon>Streptophyta</taxon>
        <taxon>Embryophyta</taxon>
        <taxon>Tracheophyta</taxon>
        <taxon>Spermatophyta</taxon>
        <taxon>Magnoliopsida</taxon>
        <taxon>eudicotyledons</taxon>
        <taxon>Gunneridae</taxon>
        <taxon>Pentapetalae</taxon>
        <taxon>rosids</taxon>
        <taxon>malvids</taxon>
        <taxon>Myrtales</taxon>
        <taxon>Onagraceae</taxon>
        <taxon>Onagroideae</taxon>
        <taxon>Onagreae</taxon>
        <taxon>Oenothera</taxon>
    </lineage>
</organism>
<protein>
    <recommendedName>
        <fullName evidence="1">Protein Ycf2</fullName>
    </recommendedName>
</protein>
<comment type="function">
    <text evidence="1">Probable ATPase of unknown function. Its presence in a non-photosynthetic plant (Epifagus virginiana) and experiments in tobacco indicate that it has an essential function which is probably not related to photosynthesis.</text>
</comment>
<comment type="subcellular location">
    <subcellularLocation>
        <location evidence="1">Plastid</location>
        <location evidence="1">Chloroplast stroma</location>
    </subcellularLocation>
</comment>
<comment type="similarity">
    <text evidence="1">Belongs to the Ycf2 family.</text>
</comment>